<reference key="1">
    <citation type="journal article" date="2006" name="Proc. Natl. Acad. Sci. U.S.A.">
        <title>Comparative genomics of the lactic acid bacteria.</title>
        <authorList>
            <person name="Makarova K.S."/>
            <person name="Slesarev A."/>
            <person name="Wolf Y.I."/>
            <person name="Sorokin A."/>
            <person name="Mirkin B."/>
            <person name="Koonin E.V."/>
            <person name="Pavlov A."/>
            <person name="Pavlova N."/>
            <person name="Karamychev V."/>
            <person name="Polouchine N."/>
            <person name="Shakhova V."/>
            <person name="Grigoriev I."/>
            <person name="Lou Y."/>
            <person name="Rohksar D."/>
            <person name="Lucas S."/>
            <person name="Huang K."/>
            <person name="Goodstein D.M."/>
            <person name="Hawkins T."/>
            <person name="Plengvidhya V."/>
            <person name="Welker D."/>
            <person name="Hughes J."/>
            <person name="Goh Y."/>
            <person name="Benson A."/>
            <person name="Baldwin K."/>
            <person name="Lee J.-H."/>
            <person name="Diaz-Muniz I."/>
            <person name="Dosti B."/>
            <person name="Smeianov V."/>
            <person name="Wechter W."/>
            <person name="Barabote R."/>
            <person name="Lorca G."/>
            <person name="Altermann E."/>
            <person name="Barrangou R."/>
            <person name="Ganesan B."/>
            <person name="Xie Y."/>
            <person name="Rawsthorne H."/>
            <person name="Tamir D."/>
            <person name="Parker C."/>
            <person name="Breidt F."/>
            <person name="Broadbent J.R."/>
            <person name="Hutkins R."/>
            <person name="O'Sullivan D."/>
            <person name="Steele J."/>
            <person name="Unlu G."/>
            <person name="Saier M.H. Jr."/>
            <person name="Klaenhammer T."/>
            <person name="Richardson P."/>
            <person name="Kozyavkin S."/>
            <person name="Weimer B.C."/>
            <person name="Mills D.A."/>
        </authorList>
    </citation>
    <scope>NUCLEOTIDE SEQUENCE [LARGE SCALE GENOMIC DNA]</scope>
    <source>
        <strain>ATCC 33323 / DSM 20243 / BCRC 14619 / CIP 102991 / JCM 1131 / KCTC 3163 / NCIMB 11718 / NCTC 13722 / AM63</strain>
    </source>
</reference>
<accession>Q041B8</accession>
<keyword id="KW-0071">Autoinducer synthesis</keyword>
<keyword id="KW-0408">Iron</keyword>
<keyword id="KW-0456">Lyase</keyword>
<keyword id="KW-0479">Metal-binding</keyword>
<keyword id="KW-0673">Quorum sensing</keyword>
<dbReference type="EC" id="4.4.1.21" evidence="1"/>
<dbReference type="EMBL" id="CP000413">
    <property type="protein sequence ID" value="ABJ60954.1"/>
    <property type="status" value="ALT_INIT"/>
    <property type="molecule type" value="Genomic_DNA"/>
</dbReference>
<dbReference type="RefSeq" id="WP_003646771.1">
    <property type="nucleotide sequence ID" value="NZ_WBMG01000009.1"/>
</dbReference>
<dbReference type="SMR" id="Q041B8"/>
<dbReference type="GeneID" id="29639947"/>
<dbReference type="KEGG" id="lga:LGAS_1662"/>
<dbReference type="HOGENOM" id="CLU_107531_2_1_9"/>
<dbReference type="BioCyc" id="LGAS324831:G1G6Y-1656-MONOMER"/>
<dbReference type="Proteomes" id="UP000000664">
    <property type="component" value="Chromosome"/>
</dbReference>
<dbReference type="GO" id="GO:0005506">
    <property type="term" value="F:iron ion binding"/>
    <property type="evidence" value="ECO:0007669"/>
    <property type="project" value="InterPro"/>
</dbReference>
<dbReference type="GO" id="GO:0043768">
    <property type="term" value="F:S-ribosylhomocysteine lyase activity"/>
    <property type="evidence" value="ECO:0007669"/>
    <property type="project" value="UniProtKB-UniRule"/>
</dbReference>
<dbReference type="GO" id="GO:0009372">
    <property type="term" value="P:quorum sensing"/>
    <property type="evidence" value="ECO:0007669"/>
    <property type="project" value="UniProtKB-UniRule"/>
</dbReference>
<dbReference type="Gene3D" id="3.30.1360.80">
    <property type="entry name" value="S-ribosylhomocysteinase (LuxS)"/>
    <property type="match status" value="1"/>
</dbReference>
<dbReference type="HAMAP" id="MF_00091">
    <property type="entry name" value="LuxS"/>
    <property type="match status" value="1"/>
</dbReference>
<dbReference type="InterPro" id="IPR037005">
    <property type="entry name" value="LuxS_sf"/>
</dbReference>
<dbReference type="InterPro" id="IPR011249">
    <property type="entry name" value="Metalloenz_LuxS/M16"/>
</dbReference>
<dbReference type="InterPro" id="IPR003815">
    <property type="entry name" value="S-ribosylhomocysteinase"/>
</dbReference>
<dbReference type="NCBIfam" id="NF002606">
    <property type="entry name" value="PRK02260.2-4"/>
    <property type="match status" value="1"/>
</dbReference>
<dbReference type="NCBIfam" id="NF002608">
    <property type="entry name" value="PRK02260.3-1"/>
    <property type="match status" value="1"/>
</dbReference>
<dbReference type="PANTHER" id="PTHR35799">
    <property type="entry name" value="S-RIBOSYLHOMOCYSTEINE LYASE"/>
    <property type="match status" value="1"/>
</dbReference>
<dbReference type="PANTHER" id="PTHR35799:SF1">
    <property type="entry name" value="S-RIBOSYLHOMOCYSTEINE LYASE"/>
    <property type="match status" value="1"/>
</dbReference>
<dbReference type="Pfam" id="PF02664">
    <property type="entry name" value="LuxS"/>
    <property type="match status" value="1"/>
</dbReference>
<dbReference type="PIRSF" id="PIRSF006160">
    <property type="entry name" value="AI2"/>
    <property type="match status" value="1"/>
</dbReference>
<dbReference type="PRINTS" id="PR01487">
    <property type="entry name" value="LUXSPROTEIN"/>
</dbReference>
<dbReference type="SUPFAM" id="SSF63411">
    <property type="entry name" value="LuxS/MPP-like metallohydrolase"/>
    <property type="match status" value="1"/>
</dbReference>
<evidence type="ECO:0000255" key="1">
    <source>
        <dbReference type="HAMAP-Rule" id="MF_00091"/>
    </source>
</evidence>
<evidence type="ECO:0000305" key="2"/>
<organism>
    <name type="scientific">Lactobacillus gasseri (strain ATCC 33323 / DSM 20243 / BCRC 14619 / CIP 102991 / JCM 1131 / KCTC 3163 / NCIMB 11718 / NCTC 13722 / AM63)</name>
    <dbReference type="NCBI Taxonomy" id="324831"/>
    <lineage>
        <taxon>Bacteria</taxon>
        <taxon>Bacillati</taxon>
        <taxon>Bacillota</taxon>
        <taxon>Bacilli</taxon>
        <taxon>Lactobacillales</taxon>
        <taxon>Lactobacillaceae</taxon>
        <taxon>Lactobacillus</taxon>
    </lineage>
</organism>
<sequence>MGKVESFELDHTKVKAPYVRLITVEEGKKGDKISNFDLRLVQPNENAIPTGGLHTIEHLLAGLLRDRIDGYIDCSPFGCRTGFHLLVWGTPSTTDVAKALKEALEEIRDKIQWEDVPGTTIKSCGNYRDHSLFSAKQWSRDILEKGISDDPFERNVVE</sequence>
<gene>
    <name evidence="1" type="primary">luxS</name>
    <name type="ordered locus">LGAS_1662</name>
</gene>
<feature type="chain" id="PRO_0000298009" description="S-ribosylhomocysteine lyase">
    <location>
        <begin position="1"/>
        <end position="158"/>
    </location>
</feature>
<feature type="binding site" evidence="1">
    <location>
        <position position="54"/>
    </location>
    <ligand>
        <name>Fe cation</name>
        <dbReference type="ChEBI" id="CHEBI:24875"/>
    </ligand>
</feature>
<feature type="binding site" evidence="1">
    <location>
        <position position="58"/>
    </location>
    <ligand>
        <name>Fe cation</name>
        <dbReference type="ChEBI" id="CHEBI:24875"/>
    </ligand>
</feature>
<feature type="binding site" evidence="1">
    <location>
        <position position="124"/>
    </location>
    <ligand>
        <name>Fe cation</name>
        <dbReference type="ChEBI" id="CHEBI:24875"/>
    </ligand>
</feature>
<protein>
    <recommendedName>
        <fullName evidence="1">S-ribosylhomocysteine lyase</fullName>
        <ecNumber evidence="1">4.4.1.21</ecNumber>
    </recommendedName>
    <alternativeName>
        <fullName evidence="1">AI-2 synthesis protein</fullName>
    </alternativeName>
    <alternativeName>
        <fullName evidence="1">Autoinducer-2 production protein LuxS</fullName>
    </alternativeName>
</protein>
<name>LUXS_LACGA</name>
<proteinExistence type="inferred from homology"/>
<comment type="function">
    <text evidence="1">Involved in the synthesis of autoinducer 2 (AI-2) which is secreted by bacteria and is used to communicate both the cell density and the metabolic potential of the environment. The regulation of gene expression in response to changes in cell density is called quorum sensing. Catalyzes the transformation of S-ribosylhomocysteine (RHC) to homocysteine (HC) and 4,5-dihydroxy-2,3-pentadione (DPD).</text>
</comment>
<comment type="catalytic activity">
    <reaction evidence="1">
        <text>S-(5-deoxy-D-ribos-5-yl)-L-homocysteine = (S)-4,5-dihydroxypentane-2,3-dione + L-homocysteine</text>
        <dbReference type="Rhea" id="RHEA:17753"/>
        <dbReference type="ChEBI" id="CHEBI:29484"/>
        <dbReference type="ChEBI" id="CHEBI:58195"/>
        <dbReference type="ChEBI" id="CHEBI:58199"/>
        <dbReference type="EC" id="4.4.1.21"/>
    </reaction>
</comment>
<comment type="cofactor">
    <cofactor evidence="1">
        <name>Fe cation</name>
        <dbReference type="ChEBI" id="CHEBI:24875"/>
    </cofactor>
    <text evidence="1">Binds 1 Fe cation per subunit.</text>
</comment>
<comment type="subunit">
    <text evidence="1">Homodimer.</text>
</comment>
<comment type="similarity">
    <text evidence="1">Belongs to the LuxS family.</text>
</comment>
<comment type="sequence caution" evidence="2">
    <conflict type="erroneous initiation">
        <sequence resource="EMBL-CDS" id="ABJ60954"/>
    </conflict>
</comment>